<evidence type="ECO:0000255" key="1">
    <source>
        <dbReference type="HAMAP-Rule" id="MF_01021"/>
    </source>
</evidence>
<feature type="chain" id="PRO_1000135350" description="Phosphoribosyl-AMP cyclohydrolase">
    <location>
        <begin position="1"/>
        <end position="125"/>
    </location>
</feature>
<feature type="binding site" evidence="1">
    <location>
        <position position="74"/>
    </location>
    <ligand>
        <name>Mg(2+)</name>
        <dbReference type="ChEBI" id="CHEBI:18420"/>
    </ligand>
</feature>
<feature type="binding site" evidence="1">
    <location>
        <position position="75"/>
    </location>
    <ligand>
        <name>Zn(2+)</name>
        <dbReference type="ChEBI" id="CHEBI:29105"/>
        <note>ligand shared between dimeric partners</note>
    </ligand>
</feature>
<feature type="binding site" evidence="1">
    <location>
        <position position="76"/>
    </location>
    <ligand>
        <name>Mg(2+)</name>
        <dbReference type="ChEBI" id="CHEBI:18420"/>
    </ligand>
</feature>
<feature type="binding site" evidence="1">
    <location>
        <position position="78"/>
    </location>
    <ligand>
        <name>Mg(2+)</name>
        <dbReference type="ChEBI" id="CHEBI:18420"/>
    </ligand>
</feature>
<feature type="binding site" evidence="1">
    <location>
        <position position="92"/>
    </location>
    <ligand>
        <name>Zn(2+)</name>
        <dbReference type="ChEBI" id="CHEBI:29105"/>
        <note>ligand shared between dimeric partners</note>
    </ligand>
</feature>
<feature type="binding site" evidence="1">
    <location>
        <position position="99"/>
    </location>
    <ligand>
        <name>Zn(2+)</name>
        <dbReference type="ChEBI" id="CHEBI:29105"/>
        <note>ligand shared between dimeric partners</note>
    </ligand>
</feature>
<accession>B3E6L7</accession>
<name>HIS3_TRIL1</name>
<protein>
    <recommendedName>
        <fullName evidence="1">Phosphoribosyl-AMP cyclohydrolase</fullName>
        <shortName evidence="1">PRA-CH</shortName>
        <ecNumber evidence="1">3.5.4.19</ecNumber>
    </recommendedName>
</protein>
<organism>
    <name type="scientific">Trichlorobacter lovleyi (strain ATCC BAA-1151 / DSM 17278 / SZ)</name>
    <name type="common">Geobacter lovleyi</name>
    <dbReference type="NCBI Taxonomy" id="398767"/>
    <lineage>
        <taxon>Bacteria</taxon>
        <taxon>Pseudomonadati</taxon>
        <taxon>Thermodesulfobacteriota</taxon>
        <taxon>Desulfuromonadia</taxon>
        <taxon>Geobacterales</taxon>
        <taxon>Geobacteraceae</taxon>
        <taxon>Trichlorobacter</taxon>
    </lineage>
</organism>
<comment type="function">
    <text evidence="1">Catalyzes the hydrolysis of the adenine ring of phosphoribosyl-AMP.</text>
</comment>
<comment type="catalytic activity">
    <reaction evidence="1">
        <text>1-(5-phospho-beta-D-ribosyl)-5'-AMP + H2O = 1-(5-phospho-beta-D-ribosyl)-5-[(5-phospho-beta-D-ribosylamino)methylideneamino]imidazole-4-carboxamide</text>
        <dbReference type="Rhea" id="RHEA:20049"/>
        <dbReference type="ChEBI" id="CHEBI:15377"/>
        <dbReference type="ChEBI" id="CHEBI:58435"/>
        <dbReference type="ChEBI" id="CHEBI:59457"/>
        <dbReference type="EC" id="3.5.4.19"/>
    </reaction>
</comment>
<comment type="cofactor">
    <cofactor evidence="1">
        <name>Mg(2+)</name>
        <dbReference type="ChEBI" id="CHEBI:18420"/>
    </cofactor>
    <text evidence="1">Binds 1 Mg(2+) ion per subunit.</text>
</comment>
<comment type="cofactor">
    <cofactor evidence="1">
        <name>Zn(2+)</name>
        <dbReference type="ChEBI" id="CHEBI:29105"/>
    </cofactor>
    <text evidence="1">Binds 1 zinc ion per subunit.</text>
</comment>
<comment type="pathway">
    <text evidence="1">Amino-acid biosynthesis; L-histidine biosynthesis; L-histidine from 5-phospho-alpha-D-ribose 1-diphosphate: step 3/9.</text>
</comment>
<comment type="subunit">
    <text evidence="1">Homodimer.</text>
</comment>
<comment type="subcellular location">
    <subcellularLocation>
        <location evidence="1">Cytoplasm</location>
    </subcellularLocation>
</comment>
<comment type="similarity">
    <text evidence="1">Belongs to the PRA-CH family.</text>
</comment>
<keyword id="KW-0028">Amino-acid biosynthesis</keyword>
<keyword id="KW-0963">Cytoplasm</keyword>
<keyword id="KW-0368">Histidine biosynthesis</keyword>
<keyword id="KW-0378">Hydrolase</keyword>
<keyword id="KW-0460">Magnesium</keyword>
<keyword id="KW-0479">Metal-binding</keyword>
<keyword id="KW-1185">Reference proteome</keyword>
<keyword id="KW-0862">Zinc</keyword>
<reference key="1">
    <citation type="submission" date="2008-05" db="EMBL/GenBank/DDBJ databases">
        <title>Complete sequence of chromosome of Geobacter lovleyi SZ.</title>
        <authorList>
            <consortium name="US DOE Joint Genome Institute"/>
            <person name="Lucas S."/>
            <person name="Copeland A."/>
            <person name="Lapidus A."/>
            <person name="Glavina del Rio T."/>
            <person name="Dalin E."/>
            <person name="Tice H."/>
            <person name="Bruce D."/>
            <person name="Goodwin L."/>
            <person name="Pitluck S."/>
            <person name="Chertkov O."/>
            <person name="Meincke L."/>
            <person name="Brettin T."/>
            <person name="Detter J.C."/>
            <person name="Han C."/>
            <person name="Tapia R."/>
            <person name="Kuske C.R."/>
            <person name="Schmutz J."/>
            <person name="Larimer F."/>
            <person name="Land M."/>
            <person name="Hauser L."/>
            <person name="Kyrpides N."/>
            <person name="Mikhailova N."/>
            <person name="Sung Y."/>
            <person name="Fletcher K.E."/>
            <person name="Ritalahti K.M."/>
            <person name="Loeffler F.E."/>
            <person name="Richardson P."/>
        </authorList>
    </citation>
    <scope>NUCLEOTIDE SEQUENCE [LARGE SCALE GENOMIC DNA]</scope>
    <source>
        <strain>ATCC BAA-1151 / DSM 17278 / SZ</strain>
    </source>
</reference>
<gene>
    <name evidence="1" type="primary">hisI</name>
    <name type="ordered locus">Glov_1120</name>
</gene>
<dbReference type="EC" id="3.5.4.19" evidence="1"/>
<dbReference type="EMBL" id="CP001089">
    <property type="protein sequence ID" value="ACD94842.1"/>
    <property type="molecule type" value="Genomic_DNA"/>
</dbReference>
<dbReference type="RefSeq" id="WP_012469191.1">
    <property type="nucleotide sequence ID" value="NC_010814.1"/>
</dbReference>
<dbReference type="SMR" id="B3E6L7"/>
<dbReference type="STRING" id="398767.Glov_1120"/>
<dbReference type="KEGG" id="glo:Glov_1120"/>
<dbReference type="eggNOG" id="COG0139">
    <property type="taxonomic scope" value="Bacteria"/>
</dbReference>
<dbReference type="HOGENOM" id="CLU_048577_5_0_7"/>
<dbReference type="OrthoDB" id="9795769at2"/>
<dbReference type="UniPathway" id="UPA00031">
    <property type="reaction ID" value="UER00008"/>
</dbReference>
<dbReference type="Proteomes" id="UP000002420">
    <property type="component" value="Chromosome"/>
</dbReference>
<dbReference type="GO" id="GO:0005737">
    <property type="term" value="C:cytoplasm"/>
    <property type="evidence" value="ECO:0007669"/>
    <property type="project" value="UniProtKB-SubCell"/>
</dbReference>
<dbReference type="GO" id="GO:0000287">
    <property type="term" value="F:magnesium ion binding"/>
    <property type="evidence" value="ECO:0007669"/>
    <property type="project" value="UniProtKB-UniRule"/>
</dbReference>
<dbReference type="GO" id="GO:0004635">
    <property type="term" value="F:phosphoribosyl-AMP cyclohydrolase activity"/>
    <property type="evidence" value="ECO:0007669"/>
    <property type="project" value="UniProtKB-UniRule"/>
</dbReference>
<dbReference type="GO" id="GO:0008270">
    <property type="term" value="F:zinc ion binding"/>
    <property type="evidence" value="ECO:0007669"/>
    <property type="project" value="UniProtKB-UniRule"/>
</dbReference>
<dbReference type="GO" id="GO:0000105">
    <property type="term" value="P:L-histidine biosynthetic process"/>
    <property type="evidence" value="ECO:0007669"/>
    <property type="project" value="UniProtKB-UniRule"/>
</dbReference>
<dbReference type="FunFam" id="3.10.20.810:FF:000001">
    <property type="entry name" value="Histidine biosynthesis bifunctional protein HisIE"/>
    <property type="match status" value="1"/>
</dbReference>
<dbReference type="Gene3D" id="3.10.20.810">
    <property type="entry name" value="Phosphoribosyl-AMP cyclohydrolase"/>
    <property type="match status" value="1"/>
</dbReference>
<dbReference type="HAMAP" id="MF_01021">
    <property type="entry name" value="HisI"/>
    <property type="match status" value="1"/>
</dbReference>
<dbReference type="InterPro" id="IPR026660">
    <property type="entry name" value="PRA-CH"/>
</dbReference>
<dbReference type="InterPro" id="IPR002496">
    <property type="entry name" value="PRib_AMP_CycHydrolase_dom"/>
</dbReference>
<dbReference type="InterPro" id="IPR038019">
    <property type="entry name" value="PRib_AMP_CycHydrolase_sf"/>
</dbReference>
<dbReference type="NCBIfam" id="NF000768">
    <property type="entry name" value="PRK00051.1"/>
    <property type="match status" value="1"/>
</dbReference>
<dbReference type="PANTHER" id="PTHR42945">
    <property type="entry name" value="HISTIDINE BIOSYNTHESIS BIFUNCTIONAL PROTEIN"/>
    <property type="match status" value="1"/>
</dbReference>
<dbReference type="PANTHER" id="PTHR42945:SF1">
    <property type="entry name" value="HISTIDINE BIOSYNTHESIS BIFUNCTIONAL PROTEIN HIS7"/>
    <property type="match status" value="1"/>
</dbReference>
<dbReference type="Pfam" id="PF01502">
    <property type="entry name" value="PRA-CH"/>
    <property type="match status" value="1"/>
</dbReference>
<dbReference type="SUPFAM" id="SSF141734">
    <property type="entry name" value="HisI-like"/>
    <property type="match status" value="1"/>
</dbReference>
<sequence>MIEINFDKMGGLIPAVIQDYENGEVLMVAFMDKKTLDLTLRDGKTWFFSRTRNKYWMKGEESGNTQDVMEVLTDCDADTVVIKVRQNGPAACHTGNRSCFYVKWEDGQWVEHSNPLFNPEEVYKK</sequence>
<proteinExistence type="inferred from homology"/>